<accession>Q1GEA9</accession>
<proteinExistence type="inferred from homology"/>
<protein>
    <recommendedName>
        <fullName evidence="1">Glutamate--tRNA ligase 2</fullName>
        <ecNumber evidence="1">6.1.1.17</ecNumber>
    </recommendedName>
    <alternativeName>
        <fullName evidence="1">Glutamyl-tRNA synthetase 2</fullName>
        <shortName evidence="1">GluRS 2</shortName>
    </alternativeName>
</protein>
<organism>
    <name type="scientific">Ruegeria sp. (strain TM1040)</name>
    <name type="common">Silicibacter sp.</name>
    <dbReference type="NCBI Taxonomy" id="292414"/>
    <lineage>
        <taxon>Bacteria</taxon>
        <taxon>Pseudomonadati</taxon>
        <taxon>Pseudomonadota</taxon>
        <taxon>Alphaproteobacteria</taxon>
        <taxon>Rhodobacterales</taxon>
        <taxon>Roseobacteraceae</taxon>
        <taxon>Ruegeria</taxon>
    </lineage>
</organism>
<comment type="function">
    <text evidence="1">Catalyzes the attachment of glutamate to tRNA(Glu) in a two-step reaction: glutamate is first activated by ATP to form Glu-AMP and then transferred to the acceptor end of tRNA(Glu).</text>
</comment>
<comment type="catalytic activity">
    <reaction evidence="1">
        <text>tRNA(Glu) + L-glutamate + ATP = L-glutamyl-tRNA(Glu) + AMP + diphosphate</text>
        <dbReference type="Rhea" id="RHEA:23540"/>
        <dbReference type="Rhea" id="RHEA-COMP:9663"/>
        <dbReference type="Rhea" id="RHEA-COMP:9680"/>
        <dbReference type="ChEBI" id="CHEBI:29985"/>
        <dbReference type="ChEBI" id="CHEBI:30616"/>
        <dbReference type="ChEBI" id="CHEBI:33019"/>
        <dbReference type="ChEBI" id="CHEBI:78442"/>
        <dbReference type="ChEBI" id="CHEBI:78520"/>
        <dbReference type="ChEBI" id="CHEBI:456215"/>
        <dbReference type="EC" id="6.1.1.17"/>
    </reaction>
</comment>
<comment type="subunit">
    <text evidence="1">Monomer.</text>
</comment>
<comment type="subcellular location">
    <subcellularLocation>
        <location evidence="1">Cytoplasm</location>
    </subcellularLocation>
</comment>
<comment type="similarity">
    <text evidence="1">Belongs to the class-I aminoacyl-tRNA synthetase family. Glutamate--tRNA ligase type 1 subfamily.</text>
</comment>
<evidence type="ECO:0000255" key="1">
    <source>
        <dbReference type="HAMAP-Rule" id="MF_00022"/>
    </source>
</evidence>
<feature type="chain" id="PRO_0000367770" description="Glutamate--tRNA ligase 2">
    <location>
        <begin position="1"/>
        <end position="441"/>
    </location>
</feature>
<feature type="short sequence motif" description="'HIGH' region" evidence="1">
    <location>
        <begin position="8"/>
        <end position="18"/>
    </location>
</feature>
<feature type="short sequence motif" description="'KMSKS' region" evidence="1">
    <location>
        <begin position="239"/>
        <end position="243"/>
    </location>
</feature>
<feature type="binding site" evidence="1">
    <location>
        <position position="242"/>
    </location>
    <ligand>
        <name>ATP</name>
        <dbReference type="ChEBI" id="CHEBI:30616"/>
    </ligand>
</feature>
<dbReference type="EC" id="6.1.1.17" evidence="1"/>
<dbReference type="EMBL" id="CP000377">
    <property type="protein sequence ID" value="ABF65007.1"/>
    <property type="molecule type" value="Genomic_DNA"/>
</dbReference>
<dbReference type="RefSeq" id="WP_011539596.1">
    <property type="nucleotide sequence ID" value="NC_008044.1"/>
</dbReference>
<dbReference type="SMR" id="Q1GEA9"/>
<dbReference type="STRING" id="292414.TM1040_2275"/>
<dbReference type="KEGG" id="sit:TM1040_2275"/>
<dbReference type="eggNOG" id="COG0008">
    <property type="taxonomic scope" value="Bacteria"/>
</dbReference>
<dbReference type="HOGENOM" id="CLU_015768_6_1_5"/>
<dbReference type="OrthoDB" id="9807503at2"/>
<dbReference type="Proteomes" id="UP000000636">
    <property type="component" value="Chromosome"/>
</dbReference>
<dbReference type="GO" id="GO:0005829">
    <property type="term" value="C:cytosol"/>
    <property type="evidence" value="ECO:0007669"/>
    <property type="project" value="TreeGrafter"/>
</dbReference>
<dbReference type="GO" id="GO:0005524">
    <property type="term" value="F:ATP binding"/>
    <property type="evidence" value="ECO:0007669"/>
    <property type="project" value="UniProtKB-UniRule"/>
</dbReference>
<dbReference type="GO" id="GO:0004818">
    <property type="term" value="F:glutamate-tRNA ligase activity"/>
    <property type="evidence" value="ECO:0007669"/>
    <property type="project" value="UniProtKB-UniRule"/>
</dbReference>
<dbReference type="GO" id="GO:0000049">
    <property type="term" value="F:tRNA binding"/>
    <property type="evidence" value="ECO:0007669"/>
    <property type="project" value="InterPro"/>
</dbReference>
<dbReference type="GO" id="GO:0006424">
    <property type="term" value="P:glutamyl-tRNA aminoacylation"/>
    <property type="evidence" value="ECO:0007669"/>
    <property type="project" value="UniProtKB-UniRule"/>
</dbReference>
<dbReference type="Gene3D" id="1.10.10.350">
    <property type="match status" value="1"/>
</dbReference>
<dbReference type="Gene3D" id="3.40.50.620">
    <property type="entry name" value="HUPs"/>
    <property type="match status" value="1"/>
</dbReference>
<dbReference type="HAMAP" id="MF_00022">
    <property type="entry name" value="Glu_tRNA_synth_type1"/>
    <property type="match status" value="1"/>
</dbReference>
<dbReference type="InterPro" id="IPR045462">
    <property type="entry name" value="aa-tRNA-synth_I_cd-bd"/>
</dbReference>
<dbReference type="InterPro" id="IPR020751">
    <property type="entry name" value="aa-tRNA-synth_I_codon-bd_sub2"/>
</dbReference>
<dbReference type="InterPro" id="IPR001412">
    <property type="entry name" value="aa-tRNA-synth_I_CS"/>
</dbReference>
<dbReference type="InterPro" id="IPR008925">
    <property type="entry name" value="aa_tRNA-synth_I_cd-bd_sf"/>
</dbReference>
<dbReference type="InterPro" id="IPR004527">
    <property type="entry name" value="Glu-tRNA-ligase_bac/mito"/>
</dbReference>
<dbReference type="InterPro" id="IPR000924">
    <property type="entry name" value="Glu/Gln-tRNA-synth"/>
</dbReference>
<dbReference type="InterPro" id="IPR020058">
    <property type="entry name" value="Glu/Gln-tRNA-synth_Ib_cat-dom"/>
</dbReference>
<dbReference type="InterPro" id="IPR049940">
    <property type="entry name" value="GluQ/Sye"/>
</dbReference>
<dbReference type="InterPro" id="IPR014729">
    <property type="entry name" value="Rossmann-like_a/b/a_fold"/>
</dbReference>
<dbReference type="NCBIfam" id="TIGR00464">
    <property type="entry name" value="gltX_bact"/>
    <property type="match status" value="1"/>
</dbReference>
<dbReference type="PANTHER" id="PTHR43311">
    <property type="entry name" value="GLUTAMATE--TRNA LIGASE"/>
    <property type="match status" value="1"/>
</dbReference>
<dbReference type="PANTHER" id="PTHR43311:SF2">
    <property type="entry name" value="GLUTAMATE--TRNA LIGASE, MITOCHONDRIAL-RELATED"/>
    <property type="match status" value="1"/>
</dbReference>
<dbReference type="Pfam" id="PF19269">
    <property type="entry name" value="Anticodon_2"/>
    <property type="match status" value="1"/>
</dbReference>
<dbReference type="Pfam" id="PF00749">
    <property type="entry name" value="tRNA-synt_1c"/>
    <property type="match status" value="1"/>
</dbReference>
<dbReference type="PRINTS" id="PR00987">
    <property type="entry name" value="TRNASYNTHGLU"/>
</dbReference>
<dbReference type="SUPFAM" id="SSF48163">
    <property type="entry name" value="An anticodon-binding domain of class I aminoacyl-tRNA synthetases"/>
    <property type="match status" value="1"/>
</dbReference>
<dbReference type="SUPFAM" id="SSF52374">
    <property type="entry name" value="Nucleotidylyl transferase"/>
    <property type="match status" value="1"/>
</dbReference>
<dbReference type="PROSITE" id="PS00178">
    <property type="entry name" value="AA_TRNA_LIGASE_I"/>
    <property type="match status" value="1"/>
</dbReference>
<sequence length="441" mass="48893">MTTTRFAPSPTGYIHVGNLRTALMNYLIARKAGGTFILRIDDTDPERSKEEYVDAIKQDLEWLGITWDKVERQSERLDRYAEAADKLREIGRFYEAFETPTELDLKRKKQLNMGKPPVYDRAALALSDAEKESLRAERGNGVWRFKLDQERIEWTDGILGDISIDAASVSDPVLIRGDGQVLYTIASVVDDTDMGVTHVVRGSDHVTNTATQIQIMAALGHGHPEFAHHSLLTGPQGEALSKRLGTLALRDLREAGVKPMALLSLMARLGSSDPVELRTDMAELVDGFDINRFGSAPTKFDAEDLYPLTARYLQTLPVATVKSELDAIGVPADTQEAFWAVAKENITTLKDLEGWWILCRDGAEPLIADEDKEFIAEAMTLLPEGPYDSESWGKWTAAVKEKTGRKGKGLFMPLRKAVTGMERGPDMSALLALMQTVRARG</sequence>
<keyword id="KW-0030">Aminoacyl-tRNA synthetase</keyword>
<keyword id="KW-0067">ATP-binding</keyword>
<keyword id="KW-0963">Cytoplasm</keyword>
<keyword id="KW-0436">Ligase</keyword>
<keyword id="KW-0547">Nucleotide-binding</keyword>
<keyword id="KW-0648">Protein biosynthesis</keyword>
<keyword id="KW-1185">Reference proteome</keyword>
<name>SYE2_RUEST</name>
<reference key="1">
    <citation type="submission" date="2006-05" db="EMBL/GenBank/DDBJ databases">
        <title>Complete sequence of chromosome of Silicibacter sp. TM1040.</title>
        <authorList>
            <consortium name="US DOE Joint Genome Institute"/>
            <person name="Copeland A."/>
            <person name="Lucas S."/>
            <person name="Lapidus A."/>
            <person name="Barry K."/>
            <person name="Detter J.C."/>
            <person name="Glavina del Rio T."/>
            <person name="Hammon N."/>
            <person name="Israni S."/>
            <person name="Dalin E."/>
            <person name="Tice H."/>
            <person name="Pitluck S."/>
            <person name="Brettin T."/>
            <person name="Bruce D."/>
            <person name="Han C."/>
            <person name="Tapia R."/>
            <person name="Goodwin L."/>
            <person name="Thompson L.S."/>
            <person name="Gilna P."/>
            <person name="Schmutz J."/>
            <person name="Larimer F."/>
            <person name="Land M."/>
            <person name="Hauser L."/>
            <person name="Kyrpides N."/>
            <person name="Kim E."/>
            <person name="Belas R."/>
            <person name="Moran M.A."/>
            <person name="Buchan A."/>
            <person name="Gonzalez J.M."/>
            <person name="Schell M.A."/>
            <person name="Sun F."/>
            <person name="Richardson P."/>
        </authorList>
    </citation>
    <scope>NUCLEOTIDE SEQUENCE [LARGE SCALE GENOMIC DNA]</scope>
    <source>
        <strain>TM1040</strain>
    </source>
</reference>
<gene>
    <name evidence="1" type="primary">gltX2</name>
    <name type="ordered locus">TM1040_2275</name>
</gene>